<comment type="function">
    <text evidence="1">Forms pores that allow passive diffusion of small molecules across the outer membrane.</text>
</comment>
<comment type="subunit">
    <text evidence="1">Homotrimer.</text>
</comment>
<comment type="subcellular location">
    <subcellularLocation>
        <location evidence="1">Cell outer membrane</location>
        <topology evidence="1">Multi-pass membrane protein</topology>
    </subcellularLocation>
</comment>
<comment type="similarity">
    <text evidence="3">Belongs to the Gram-negative porin family.</text>
</comment>
<name>OMPD_SALPA</name>
<gene>
    <name type="primary">ompD</name>
    <name type="ordered locus">SPA1296</name>
</gene>
<protein>
    <recommendedName>
        <fullName>Outer membrane porin protein OmpD</fullName>
    </recommendedName>
</protein>
<organism>
    <name type="scientific">Salmonella paratyphi A (strain ATCC 9150 / SARB42)</name>
    <dbReference type="NCBI Taxonomy" id="295319"/>
    <lineage>
        <taxon>Bacteria</taxon>
        <taxon>Pseudomonadati</taxon>
        <taxon>Pseudomonadota</taxon>
        <taxon>Gammaproteobacteria</taxon>
        <taxon>Enterobacterales</taxon>
        <taxon>Enterobacteriaceae</taxon>
        <taxon>Salmonella</taxon>
    </lineage>
</organism>
<feature type="signal peptide" evidence="2">
    <location>
        <begin position="1"/>
        <end position="21"/>
    </location>
</feature>
<feature type="chain" id="PRO_0000321871" description="Outer membrane porin protein OmpD">
    <location>
        <begin position="22"/>
        <end position="362"/>
    </location>
</feature>
<accession>Q5PHY0</accession>
<proteinExistence type="inferred from homology"/>
<sequence>MKLKLVAVAVTSLLAAGVVNAAEVYNKDGNKLDLYGKVHAQHYFSDDNGSDGDKTYARLGFKGETQINDQLTGFGQWEYEFKGNRTESQGADKDKTRLAFAGLKFADYGSFDYGRNYGVAYDIGAWTDVLPEFGGDTWTQTDVFMTGRTTGVATYRNTDFFGLVEGLNFAAQYQGKNDRDGAYESNGDGFGLSATYEYEGFGVGAAYAKSDRTNNQVKAASNLNAAGKNAEVWAAGLKYDANNIYLATTYSETLNMTTFGEDAAGDAFIANKTQNFEAVAQYQFDFGLRPSIAYLKSKGKNLGTYGDQDLVEYIDVGATYYFNKNMSTFVDYKINLLDDSDFTKAAKVSTDNIVAVGLNYQF</sequence>
<evidence type="ECO:0000250" key="1"/>
<evidence type="ECO:0000255" key="2"/>
<evidence type="ECO:0000305" key="3"/>
<keyword id="KW-0998">Cell outer membrane</keyword>
<keyword id="KW-0406">Ion transport</keyword>
<keyword id="KW-0472">Membrane</keyword>
<keyword id="KW-0626">Porin</keyword>
<keyword id="KW-0732">Signal</keyword>
<keyword id="KW-0812">Transmembrane</keyword>
<keyword id="KW-1134">Transmembrane beta strand</keyword>
<keyword id="KW-0813">Transport</keyword>
<reference key="1">
    <citation type="journal article" date="2004" name="Nat. Genet.">
        <title>Comparison of genome degradation in Paratyphi A and Typhi, human-restricted serovars of Salmonella enterica that cause typhoid.</title>
        <authorList>
            <person name="McClelland M."/>
            <person name="Sanderson K.E."/>
            <person name="Clifton S.W."/>
            <person name="Latreille P."/>
            <person name="Porwollik S."/>
            <person name="Sabo A."/>
            <person name="Meyer R."/>
            <person name="Bieri T."/>
            <person name="Ozersky P."/>
            <person name="McLellan M."/>
            <person name="Harkins C.R."/>
            <person name="Wang C."/>
            <person name="Nguyen C."/>
            <person name="Berghoff A."/>
            <person name="Elliott G."/>
            <person name="Kohlberg S."/>
            <person name="Strong C."/>
            <person name="Du F."/>
            <person name="Carter J."/>
            <person name="Kremizki C."/>
            <person name="Layman D."/>
            <person name="Leonard S."/>
            <person name="Sun H."/>
            <person name="Fulton L."/>
            <person name="Nash W."/>
            <person name="Miner T."/>
            <person name="Minx P."/>
            <person name="Delehaunty K."/>
            <person name="Fronick C."/>
            <person name="Magrini V."/>
            <person name="Nhan M."/>
            <person name="Warren W."/>
            <person name="Florea L."/>
            <person name="Spieth J."/>
            <person name="Wilson R.K."/>
        </authorList>
    </citation>
    <scope>NUCLEOTIDE SEQUENCE [LARGE SCALE GENOMIC DNA]</scope>
    <source>
        <strain>ATCC 9150 / SARB42</strain>
    </source>
</reference>
<dbReference type="EMBL" id="CP000026">
    <property type="protein sequence ID" value="AAV77244.1"/>
    <property type="molecule type" value="Genomic_DNA"/>
</dbReference>
<dbReference type="RefSeq" id="WP_000769035.1">
    <property type="nucleotide sequence ID" value="NC_006511.1"/>
</dbReference>
<dbReference type="SMR" id="Q5PHY0"/>
<dbReference type="KEGG" id="spt:SPA1296"/>
<dbReference type="HOGENOM" id="CLU_058202_0_0_6"/>
<dbReference type="Proteomes" id="UP000008185">
    <property type="component" value="Chromosome"/>
</dbReference>
<dbReference type="GO" id="GO:0009279">
    <property type="term" value="C:cell outer membrane"/>
    <property type="evidence" value="ECO:0007669"/>
    <property type="project" value="UniProtKB-SubCell"/>
</dbReference>
<dbReference type="GO" id="GO:0046930">
    <property type="term" value="C:pore complex"/>
    <property type="evidence" value="ECO:0007669"/>
    <property type="project" value="UniProtKB-KW"/>
</dbReference>
<dbReference type="GO" id="GO:0015288">
    <property type="term" value="F:porin activity"/>
    <property type="evidence" value="ECO:0007669"/>
    <property type="project" value="UniProtKB-KW"/>
</dbReference>
<dbReference type="GO" id="GO:0034220">
    <property type="term" value="P:monoatomic ion transmembrane transport"/>
    <property type="evidence" value="ECO:0007669"/>
    <property type="project" value="InterPro"/>
</dbReference>
<dbReference type="CDD" id="cd00342">
    <property type="entry name" value="gram_neg_porins"/>
    <property type="match status" value="1"/>
</dbReference>
<dbReference type="Gene3D" id="2.40.160.10">
    <property type="entry name" value="Porin"/>
    <property type="match status" value="1"/>
</dbReference>
<dbReference type="InterPro" id="IPR050298">
    <property type="entry name" value="Gram-neg_bact_OMP"/>
</dbReference>
<dbReference type="InterPro" id="IPR033900">
    <property type="entry name" value="Gram_neg_porin_domain"/>
</dbReference>
<dbReference type="InterPro" id="IPR023614">
    <property type="entry name" value="Porin_dom_sf"/>
</dbReference>
<dbReference type="InterPro" id="IPR001897">
    <property type="entry name" value="Porin_gammaproteobac"/>
</dbReference>
<dbReference type="InterPro" id="IPR001702">
    <property type="entry name" value="Porin_Gram-ve"/>
</dbReference>
<dbReference type="InterPro" id="IPR013793">
    <property type="entry name" value="Porin_Gram-ve_CS"/>
</dbReference>
<dbReference type="NCBIfam" id="NF007841">
    <property type="entry name" value="PRK10554.1"/>
    <property type="match status" value="1"/>
</dbReference>
<dbReference type="PANTHER" id="PTHR34501:SF2">
    <property type="entry name" value="OUTER MEMBRANE PORIN F-RELATED"/>
    <property type="match status" value="1"/>
</dbReference>
<dbReference type="PANTHER" id="PTHR34501">
    <property type="entry name" value="PROTEIN YDDL-RELATED"/>
    <property type="match status" value="1"/>
</dbReference>
<dbReference type="Pfam" id="PF00267">
    <property type="entry name" value="Porin_1"/>
    <property type="match status" value="1"/>
</dbReference>
<dbReference type="PRINTS" id="PR00183">
    <property type="entry name" value="ECOLIPORIN"/>
</dbReference>
<dbReference type="PRINTS" id="PR00182">
    <property type="entry name" value="ECOLNEIPORIN"/>
</dbReference>
<dbReference type="SUPFAM" id="SSF56935">
    <property type="entry name" value="Porins"/>
    <property type="match status" value="1"/>
</dbReference>
<dbReference type="PROSITE" id="PS00576">
    <property type="entry name" value="GRAM_NEG_PORIN"/>
    <property type="match status" value="1"/>
</dbReference>